<dbReference type="EMBL" id="AP008957">
    <property type="protein sequence ID" value="BAH33705.1"/>
    <property type="molecule type" value="Genomic_DNA"/>
</dbReference>
<dbReference type="RefSeq" id="WP_003944958.1">
    <property type="nucleotide sequence ID" value="NC_012490.1"/>
</dbReference>
<dbReference type="SMR" id="C0ZZC0"/>
<dbReference type="GeneID" id="93804135"/>
<dbReference type="KEGG" id="rer:RER_29970"/>
<dbReference type="eggNOG" id="COG0231">
    <property type="taxonomic scope" value="Bacteria"/>
</dbReference>
<dbReference type="HOGENOM" id="CLU_074944_0_1_11"/>
<dbReference type="UniPathway" id="UPA00345"/>
<dbReference type="Proteomes" id="UP000002204">
    <property type="component" value="Chromosome"/>
</dbReference>
<dbReference type="GO" id="GO:0005737">
    <property type="term" value="C:cytoplasm"/>
    <property type="evidence" value="ECO:0007669"/>
    <property type="project" value="UniProtKB-SubCell"/>
</dbReference>
<dbReference type="GO" id="GO:0003746">
    <property type="term" value="F:translation elongation factor activity"/>
    <property type="evidence" value="ECO:0007669"/>
    <property type="project" value="UniProtKB-UniRule"/>
</dbReference>
<dbReference type="GO" id="GO:0043043">
    <property type="term" value="P:peptide biosynthetic process"/>
    <property type="evidence" value="ECO:0007669"/>
    <property type="project" value="InterPro"/>
</dbReference>
<dbReference type="CDD" id="cd04470">
    <property type="entry name" value="S1_EF-P_repeat_1"/>
    <property type="match status" value="1"/>
</dbReference>
<dbReference type="CDD" id="cd05794">
    <property type="entry name" value="S1_EF-P_repeat_2"/>
    <property type="match status" value="1"/>
</dbReference>
<dbReference type="FunFam" id="2.30.30.30:FF:000003">
    <property type="entry name" value="Elongation factor P"/>
    <property type="match status" value="1"/>
</dbReference>
<dbReference type="FunFam" id="2.40.50.140:FF:000004">
    <property type="entry name" value="Elongation factor P"/>
    <property type="match status" value="1"/>
</dbReference>
<dbReference type="FunFam" id="2.40.50.140:FF:000009">
    <property type="entry name" value="Elongation factor P"/>
    <property type="match status" value="1"/>
</dbReference>
<dbReference type="Gene3D" id="2.30.30.30">
    <property type="match status" value="1"/>
</dbReference>
<dbReference type="Gene3D" id="2.40.50.140">
    <property type="entry name" value="Nucleic acid-binding proteins"/>
    <property type="match status" value="2"/>
</dbReference>
<dbReference type="HAMAP" id="MF_00141">
    <property type="entry name" value="EF_P"/>
    <property type="match status" value="1"/>
</dbReference>
<dbReference type="InterPro" id="IPR015365">
    <property type="entry name" value="Elong-fact-P_C"/>
</dbReference>
<dbReference type="InterPro" id="IPR012340">
    <property type="entry name" value="NA-bd_OB-fold"/>
</dbReference>
<dbReference type="InterPro" id="IPR014722">
    <property type="entry name" value="Rib_uL2_dom2"/>
</dbReference>
<dbReference type="InterPro" id="IPR020599">
    <property type="entry name" value="Transl_elong_fac_P/YeiP"/>
</dbReference>
<dbReference type="InterPro" id="IPR013185">
    <property type="entry name" value="Transl_elong_KOW-like"/>
</dbReference>
<dbReference type="InterPro" id="IPR001059">
    <property type="entry name" value="Transl_elong_P/YeiP_cen"/>
</dbReference>
<dbReference type="InterPro" id="IPR013852">
    <property type="entry name" value="Transl_elong_P/YeiP_CS"/>
</dbReference>
<dbReference type="InterPro" id="IPR011768">
    <property type="entry name" value="Transl_elongation_fac_P"/>
</dbReference>
<dbReference type="InterPro" id="IPR008991">
    <property type="entry name" value="Translation_prot_SH3-like_sf"/>
</dbReference>
<dbReference type="NCBIfam" id="TIGR00038">
    <property type="entry name" value="efp"/>
    <property type="match status" value="1"/>
</dbReference>
<dbReference type="NCBIfam" id="NF001810">
    <property type="entry name" value="PRK00529.1"/>
    <property type="match status" value="1"/>
</dbReference>
<dbReference type="PANTHER" id="PTHR30053">
    <property type="entry name" value="ELONGATION FACTOR P"/>
    <property type="match status" value="1"/>
</dbReference>
<dbReference type="PANTHER" id="PTHR30053:SF12">
    <property type="entry name" value="ELONGATION FACTOR P (EF-P) FAMILY PROTEIN"/>
    <property type="match status" value="1"/>
</dbReference>
<dbReference type="Pfam" id="PF01132">
    <property type="entry name" value="EFP"/>
    <property type="match status" value="1"/>
</dbReference>
<dbReference type="Pfam" id="PF08207">
    <property type="entry name" value="EFP_N"/>
    <property type="match status" value="1"/>
</dbReference>
<dbReference type="Pfam" id="PF09285">
    <property type="entry name" value="Elong-fact-P_C"/>
    <property type="match status" value="1"/>
</dbReference>
<dbReference type="PIRSF" id="PIRSF005901">
    <property type="entry name" value="EF-P"/>
    <property type="match status" value="1"/>
</dbReference>
<dbReference type="SMART" id="SM01185">
    <property type="entry name" value="EFP"/>
    <property type="match status" value="1"/>
</dbReference>
<dbReference type="SMART" id="SM00841">
    <property type="entry name" value="Elong-fact-P_C"/>
    <property type="match status" value="1"/>
</dbReference>
<dbReference type="SUPFAM" id="SSF50249">
    <property type="entry name" value="Nucleic acid-binding proteins"/>
    <property type="match status" value="2"/>
</dbReference>
<dbReference type="SUPFAM" id="SSF50104">
    <property type="entry name" value="Translation proteins SH3-like domain"/>
    <property type="match status" value="1"/>
</dbReference>
<dbReference type="PROSITE" id="PS01275">
    <property type="entry name" value="EFP"/>
    <property type="match status" value="1"/>
</dbReference>
<gene>
    <name evidence="1" type="primary">efp</name>
    <name type="ordered locus">RER_29970</name>
</gene>
<evidence type="ECO:0000255" key="1">
    <source>
        <dbReference type="HAMAP-Rule" id="MF_00141"/>
    </source>
</evidence>
<feature type="chain" id="PRO_1000203277" description="Elongation factor P">
    <location>
        <begin position="1"/>
        <end position="187"/>
    </location>
</feature>
<accession>C0ZZC0</accession>
<proteinExistence type="inferred from homology"/>
<comment type="function">
    <text evidence="1">Involved in peptide bond synthesis. Stimulates efficient translation and peptide-bond synthesis on native or reconstituted 70S ribosomes in vitro. Probably functions indirectly by altering the affinity of the ribosome for aminoacyl-tRNA, thus increasing their reactivity as acceptors for peptidyl transferase.</text>
</comment>
<comment type="pathway">
    <text evidence="1">Protein biosynthesis; polypeptide chain elongation.</text>
</comment>
<comment type="subcellular location">
    <subcellularLocation>
        <location evidence="1">Cytoplasm</location>
    </subcellularLocation>
</comment>
<comment type="similarity">
    <text evidence="1">Belongs to the elongation factor P family.</text>
</comment>
<name>EFP_RHOE4</name>
<reference key="1">
    <citation type="submission" date="2005-03" db="EMBL/GenBank/DDBJ databases">
        <title>Comparison of the complete genome sequences of Rhodococcus erythropolis PR4 and Rhodococcus opacus B4.</title>
        <authorList>
            <person name="Takarada H."/>
            <person name="Sekine M."/>
            <person name="Hosoyama A."/>
            <person name="Yamada R."/>
            <person name="Fujisawa T."/>
            <person name="Omata S."/>
            <person name="Shimizu A."/>
            <person name="Tsukatani N."/>
            <person name="Tanikawa S."/>
            <person name="Fujita N."/>
            <person name="Harayama S."/>
        </authorList>
    </citation>
    <scope>NUCLEOTIDE SEQUENCE [LARGE SCALE GENOMIC DNA]</scope>
    <source>
        <strain>PR4 / NBRC 100887</strain>
    </source>
</reference>
<protein>
    <recommendedName>
        <fullName evidence="1">Elongation factor P</fullName>
        <shortName evidence="1">EF-P</shortName>
    </recommendedName>
</protein>
<organism>
    <name type="scientific">Rhodococcus erythropolis (strain PR4 / NBRC 100887)</name>
    <dbReference type="NCBI Taxonomy" id="234621"/>
    <lineage>
        <taxon>Bacteria</taxon>
        <taxon>Bacillati</taxon>
        <taxon>Actinomycetota</taxon>
        <taxon>Actinomycetes</taxon>
        <taxon>Mycobacteriales</taxon>
        <taxon>Nocardiaceae</taxon>
        <taxon>Rhodococcus</taxon>
        <taxon>Rhodococcus erythropolis group</taxon>
    </lineage>
</organism>
<sequence length="187" mass="20523">MASTSDFKNGLVLQIEGQLWTIIEFQHVKPGKGPAFVRTKLKNVLSGKVVDKTFNAGVKVETATVDRRDMTYLYHDGSDYIFMDGDTYDQVSISESTVGDQSRFLLENMAVQVATHEDVPLFVELPVTVELVVKHTDPGLQGDRSTGGTKPATLETGAEINVPLFINTGDKLKVDSRDGNYLGRVNS</sequence>
<keyword id="KW-0963">Cytoplasm</keyword>
<keyword id="KW-0251">Elongation factor</keyword>
<keyword id="KW-0648">Protein biosynthesis</keyword>